<evidence type="ECO:0000255" key="1">
    <source>
        <dbReference type="HAMAP-Rule" id="MF_01261"/>
    </source>
</evidence>
<keyword id="KW-0067">ATP-binding</keyword>
<keyword id="KW-0378">Hydrolase</keyword>
<keyword id="KW-0460">Magnesium</keyword>
<keyword id="KW-0479">Metal-binding</keyword>
<keyword id="KW-0511">Multifunctional enzyme</keyword>
<keyword id="KW-0533">Nickel</keyword>
<keyword id="KW-0547">Nucleotide-binding</keyword>
<keyword id="KW-0548">Nucleotidyltransferase</keyword>
<keyword id="KW-1185">Reference proteome</keyword>
<keyword id="KW-0692">RNA repair</keyword>
<keyword id="KW-0694">RNA-binding</keyword>
<keyword id="KW-0808">Transferase</keyword>
<keyword id="KW-0819">tRNA processing</keyword>
<proteinExistence type="inferred from homology"/>
<comment type="function">
    <text evidence="1">Catalyzes the addition and repair of the essential 3'-terminal CCA sequence in tRNAs without using a nucleic acid template. Adds these three nucleotides in the order of C, C, and A to the tRNA nucleotide-73, using CTP and ATP as substrates and producing inorganic pyrophosphate. tRNA 3'-terminal CCA addition is required both for tRNA processing and repair. Also involved in tRNA surveillance by mediating tandem CCA addition to generate a CCACCA at the 3' terminus of unstable tRNAs. While stable tRNAs receive only 3'-terminal CCA, unstable tRNAs are marked with CCACCA and rapidly degraded.</text>
</comment>
<comment type="catalytic activity">
    <reaction evidence="1">
        <text>a tRNA precursor + 2 CTP + ATP = a tRNA with a 3' CCA end + 3 diphosphate</text>
        <dbReference type="Rhea" id="RHEA:14433"/>
        <dbReference type="Rhea" id="RHEA-COMP:10465"/>
        <dbReference type="Rhea" id="RHEA-COMP:10468"/>
        <dbReference type="ChEBI" id="CHEBI:30616"/>
        <dbReference type="ChEBI" id="CHEBI:33019"/>
        <dbReference type="ChEBI" id="CHEBI:37563"/>
        <dbReference type="ChEBI" id="CHEBI:74896"/>
        <dbReference type="ChEBI" id="CHEBI:83071"/>
        <dbReference type="EC" id="2.7.7.72"/>
    </reaction>
</comment>
<comment type="catalytic activity">
    <reaction evidence="1">
        <text>a tRNA with a 3' CCA end + 2 CTP + ATP = a tRNA with a 3' CCACCA end + 3 diphosphate</text>
        <dbReference type="Rhea" id="RHEA:76235"/>
        <dbReference type="Rhea" id="RHEA-COMP:10468"/>
        <dbReference type="Rhea" id="RHEA-COMP:18655"/>
        <dbReference type="ChEBI" id="CHEBI:30616"/>
        <dbReference type="ChEBI" id="CHEBI:33019"/>
        <dbReference type="ChEBI" id="CHEBI:37563"/>
        <dbReference type="ChEBI" id="CHEBI:83071"/>
        <dbReference type="ChEBI" id="CHEBI:195187"/>
    </reaction>
    <physiologicalReaction direction="left-to-right" evidence="1">
        <dbReference type="Rhea" id="RHEA:76236"/>
    </physiologicalReaction>
</comment>
<comment type="cofactor">
    <cofactor evidence="1">
        <name>Mg(2+)</name>
        <dbReference type="ChEBI" id="CHEBI:18420"/>
    </cofactor>
    <text evidence="1">Magnesium is required for nucleotidyltransferase activity.</text>
</comment>
<comment type="cofactor">
    <cofactor evidence="1">
        <name>Ni(2+)</name>
        <dbReference type="ChEBI" id="CHEBI:49786"/>
    </cofactor>
    <text evidence="1">Nickel for phosphatase activity.</text>
</comment>
<comment type="subunit">
    <text evidence="1">Monomer. Can also form homodimers and oligomers.</text>
</comment>
<comment type="domain">
    <text evidence="1">Comprises two domains: an N-terminal domain containing the nucleotidyltransferase activity and a C-terminal HD domain associated with both phosphodiesterase and phosphatase activities.</text>
</comment>
<comment type="miscellaneous">
    <text evidence="1">A single active site specifically recognizes both ATP and CTP and is responsible for their addition.</text>
</comment>
<comment type="similarity">
    <text evidence="1">Belongs to the tRNA nucleotidyltransferase/poly(A) polymerase family. Bacterial CCA-adding enzyme type 1 subfamily.</text>
</comment>
<feature type="chain" id="PRO_1000140054" description="Multifunctional CCA protein">
    <location>
        <begin position="1"/>
        <end position="413"/>
    </location>
</feature>
<feature type="domain" description="HD" evidence="1">
    <location>
        <begin position="228"/>
        <end position="329"/>
    </location>
</feature>
<feature type="binding site" evidence="1">
    <location>
        <position position="8"/>
    </location>
    <ligand>
        <name>ATP</name>
        <dbReference type="ChEBI" id="CHEBI:30616"/>
    </ligand>
</feature>
<feature type="binding site" evidence="1">
    <location>
        <position position="8"/>
    </location>
    <ligand>
        <name>CTP</name>
        <dbReference type="ChEBI" id="CHEBI:37563"/>
    </ligand>
</feature>
<feature type="binding site" evidence="1">
    <location>
        <position position="11"/>
    </location>
    <ligand>
        <name>ATP</name>
        <dbReference type="ChEBI" id="CHEBI:30616"/>
    </ligand>
</feature>
<feature type="binding site" evidence="1">
    <location>
        <position position="11"/>
    </location>
    <ligand>
        <name>CTP</name>
        <dbReference type="ChEBI" id="CHEBI:37563"/>
    </ligand>
</feature>
<feature type="binding site" evidence="1">
    <location>
        <position position="21"/>
    </location>
    <ligand>
        <name>Mg(2+)</name>
        <dbReference type="ChEBI" id="CHEBI:18420"/>
    </ligand>
</feature>
<feature type="binding site" evidence="1">
    <location>
        <position position="23"/>
    </location>
    <ligand>
        <name>Mg(2+)</name>
        <dbReference type="ChEBI" id="CHEBI:18420"/>
    </ligand>
</feature>
<feature type="binding site" evidence="1">
    <location>
        <position position="91"/>
    </location>
    <ligand>
        <name>ATP</name>
        <dbReference type="ChEBI" id="CHEBI:30616"/>
    </ligand>
</feature>
<feature type="binding site" evidence="1">
    <location>
        <position position="91"/>
    </location>
    <ligand>
        <name>CTP</name>
        <dbReference type="ChEBI" id="CHEBI:37563"/>
    </ligand>
</feature>
<feature type="binding site" evidence="1">
    <location>
        <position position="137"/>
    </location>
    <ligand>
        <name>ATP</name>
        <dbReference type="ChEBI" id="CHEBI:30616"/>
    </ligand>
</feature>
<feature type="binding site" evidence="1">
    <location>
        <position position="137"/>
    </location>
    <ligand>
        <name>CTP</name>
        <dbReference type="ChEBI" id="CHEBI:37563"/>
    </ligand>
</feature>
<feature type="binding site" evidence="1">
    <location>
        <position position="140"/>
    </location>
    <ligand>
        <name>ATP</name>
        <dbReference type="ChEBI" id="CHEBI:30616"/>
    </ligand>
</feature>
<feature type="binding site" evidence="1">
    <location>
        <position position="140"/>
    </location>
    <ligand>
        <name>CTP</name>
        <dbReference type="ChEBI" id="CHEBI:37563"/>
    </ligand>
</feature>
<gene>
    <name evidence="1" type="primary">cca</name>
    <name type="ordered locus">Swoo_1166</name>
</gene>
<sequence length="413" mass="46361">MKFYLVGGAVRDNLLKLPIKDRDYMVVGAAPEQMFELGYKQVGKDFPVFLHPKTQQEYALARTERKTGSGYGGFSCDASPDVTLEEDLLRRDLTINAIAQDDKGELFDPYGGIKDIESKMLRHVSDAFVEDPLRVLRVARFAARFHHLGFTVADETLALMTKISQSGELEALTSERVFLELDKALSTQNPQIFIEVLNQCQALEILFPEIHALFGVPQPEKWHPEIDTGIHTLMVLAQAAKLSDENSVRFAALVHDLGKALSPKATLPKHHGHGQSGLALIKVLCARAKVPNEYRDLALLVSDQHQNVHNIRELRPETLIKIFDKADLWRKPDRLEQLATACEADSKGRLGLENSPYPQADYLRESFQVANSVAVKPIIEAGFKGAEIKEQLKLKRIEIVTEFKRNFNESAIE</sequence>
<dbReference type="EC" id="2.7.7.72" evidence="1"/>
<dbReference type="EC" id="3.1.3.-" evidence="1"/>
<dbReference type="EC" id="3.1.4.-" evidence="1"/>
<dbReference type="EMBL" id="CP000961">
    <property type="protein sequence ID" value="ACA85459.1"/>
    <property type="molecule type" value="Genomic_DNA"/>
</dbReference>
<dbReference type="RefSeq" id="WP_012323805.1">
    <property type="nucleotide sequence ID" value="NC_010506.1"/>
</dbReference>
<dbReference type="SMR" id="B1KHF1"/>
<dbReference type="STRING" id="392500.Swoo_1166"/>
<dbReference type="KEGG" id="swd:Swoo_1166"/>
<dbReference type="eggNOG" id="COG0617">
    <property type="taxonomic scope" value="Bacteria"/>
</dbReference>
<dbReference type="HOGENOM" id="CLU_015961_1_1_6"/>
<dbReference type="Proteomes" id="UP000002168">
    <property type="component" value="Chromosome"/>
</dbReference>
<dbReference type="GO" id="GO:0005524">
    <property type="term" value="F:ATP binding"/>
    <property type="evidence" value="ECO:0007669"/>
    <property type="project" value="UniProtKB-UniRule"/>
</dbReference>
<dbReference type="GO" id="GO:0004810">
    <property type="term" value="F:CCA tRNA nucleotidyltransferase activity"/>
    <property type="evidence" value="ECO:0007669"/>
    <property type="project" value="UniProtKB-UniRule"/>
</dbReference>
<dbReference type="GO" id="GO:0004112">
    <property type="term" value="F:cyclic-nucleotide phosphodiesterase activity"/>
    <property type="evidence" value="ECO:0007669"/>
    <property type="project" value="UniProtKB-UniRule"/>
</dbReference>
<dbReference type="GO" id="GO:0000287">
    <property type="term" value="F:magnesium ion binding"/>
    <property type="evidence" value="ECO:0007669"/>
    <property type="project" value="UniProtKB-UniRule"/>
</dbReference>
<dbReference type="GO" id="GO:0016791">
    <property type="term" value="F:phosphatase activity"/>
    <property type="evidence" value="ECO:0007669"/>
    <property type="project" value="UniProtKB-UniRule"/>
</dbReference>
<dbReference type="GO" id="GO:0000049">
    <property type="term" value="F:tRNA binding"/>
    <property type="evidence" value="ECO:0007669"/>
    <property type="project" value="UniProtKB-UniRule"/>
</dbReference>
<dbReference type="GO" id="GO:0042245">
    <property type="term" value="P:RNA repair"/>
    <property type="evidence" value="ECO:0007669"/>
    <property type="project" value="UniProtKB-KW"/>
</dbReference>
<dbReference type="GO" id="GO:0001680">
    <property type="term" value="P:tRNA 3'-terminal CCA addition"/>
    <property type="evidence" value="ECO:0007669"/>
    <property type="project" value="UniProtKB-UniRule"/>
</dbReference>
<dbReference type="CDD" id="cd00077">
    <property type="entry name" value="HDc"/>
    <property type="match status" value="1"/>
</dbReference>
<dbReference type="CDD" id="cd05398">
    <property type="entry name" value="NT_ClassII-CCAase"/>
    <property type="match status" value="1"/>
</dbReference>
<dbReference type="FunFam" id="1.10.3090.10:FF:000001">
    <property type="entry name" value="Multifunctional CCA protein"/>
    <property type="match status" value="1"/>
</dbReference>
<dbReference type="Gene3D" id="3.30.460.10">
    <property type="entry name" value="Beta Polymerase, domain 2"/>
    <property type="match status" value="1"/>
</dbReference>
<dbReference type="Gene3D" id="1.10.3090.10">
    <property type="entry name" value="cca-adding enzyme, domain 2"/>
    <property type="match status" value="1"/>
</dbReference>
<dbReference type="HAMAP" id="MF_01261">
    <property type="entry name" value="CCA_bact_type1"/>
    <property type="match status" value="1"/>
</dbReference>
<dbReference type="HAMAP" id="MF_01262">
    <property type="entry name" value="CCA_bact_type2"/>
    <property type="match status" value="1"/>
</dbReference>
<dbReference type="InterPro" id="IPR012006">
    <property type="entry name" value="CCA_bact"/>
</dbReference>
<dbReference type="InterPro" id="IPR003607">
    <property type="entry name" value="HD/PDEase_dom"/>
</dbReference>
<dbReference type="InterPro" id="IPR006674">
    <property type="entry name" value="HD_domain"/>
</dbReference>
<dbReference type="InterPro" id="IPR043519">
    <property type="entry name" value="NT_sf"/>
</dbReference>
<dbReference type="InterPro" id="IPR002646">
    <property type="entry name" value="PolA_pol_head_dom"/>
</dbReference>
<dbReference type="InterPro" id="IPR032828">
    <property type="entry name" value="PolyA_RNA-bd"/>
</dbReference>
<dbReference type="InterPro" id="IPR050124">
    <property type="entry name" value="tRNA_CCA-adding_enzyme"/>
</dbReference>
<dbReference type="NCBIfam" id="NF008137">
    <property type="entry name" value="PRK10885.1"/>
    <property type="match status" value="1"/>
</dbReference>
<dbReference type="PANTHER" id="PTHR47545">
    <property type="entry name" value="MULTIFUNCTIONAL CCA PROTEIN"/>
    <property type="match status" value="1"/>
</dbReference>
<dbReference type="PANTHER" id="PTHR47545:SF1">
    <property type="entry name" value="MULTIFUNCTIONAL CCA PROTEIN"/>
    <property type="match status" value="1"/>
</dbReference>
<dbReference type="Pfam" id="PF01966">
    <property type="entry name" value="HD"/>
    <property type="match status" value="1"/>
</dbReference>
<dbReference type="Pfam" id="PF01743">
    <property type="entry name" value="PolyA_pol"/>
    <property type="match status" value="1"/>
</dbReference>
<dbReference type="Pfam" id="PF12627">
    <property type="entry name" value="PolyA_pol_RNAbd"/>
    <property type="match status" value="1"/>
</dbReference>
<dbReference type="PIRSF" id="PIRSF000813">
    <property type="entry name" value="CCA_bact"/>
    <property type="match status" value="1"/>
</dbReference>
<dbReference type="SUPFAM" id="SSF81301">
    <property type="entry name" value="Nucleotidyltransferase"/>
    <property type="match status" value="1"/>
</dbReference>
<dbReference type="SUPFAM" id="SSF81891">
    <property type="entry name" value="Poly A polymerase C-terminal region-like"/>
    <property type="match status" value="1"/>
</dbReference>
<dbReference type="PROSITE" id="PS51831">
    <property type="entry name" value="HD"/>
    <property type="match status" value="1"/>
</dbReference>
<organism>
    <name type="scientific">Shewanella woodyi (strain ATCC 51908 / MS32)</name>
    <dbReference type="NCBI Taxonomy" id="392500"/>
    <lineage>
        <taxon>Bacteria</taxon>
        <taxon>Pseudomonadati</taxon>
        <taxon>Pseudomonadota</taxon>
        <taxon>Gammaproteobacteria</taxon>
        <taxon>Alteromonadales</taxon>
        <taxon>Shewanellaceae</taxon>
        <taxon>Shewanella</taxon>
    </lineage>
</organism>
<accession>B1KHF1</accession>
<reference key="1">
    <citation type="submission" date="2008-02" db="EMBL/GenBank/DDBJ databases">
        <title>Complete sequence of Shewanella woodyi ATCC 51908.</title>
        <authorList>
            <consortium name="US DOE Joint Genome Institute"/>
            <person name="Copeland A."/>
            <person name="Lucas S."/>
            <person name="Lapidus A."/>
            <person name="Glavina del Rio T."/>
            <person name="Dalin E."/>
            <person name="Tice H."/>
            <person name="Bruce D."/>
            <person name="Goodwin L."/>
            <person name="Pitluck S."/>
            <person name="Sims D."/>
            <person name="Brettin T."/>
            <person name="Detter J.C."/>
            <person name="Han C."/>
            <person name="Kuske C.R."/>
            <person name="Schmutz J."/>
            <person name="Larimer F."/>
            <person name="Land M."/>
            <person name="Hauser L."/>
            <person name="Kyrpides N."/>
            <person name="Lykidis A."/>
            <person name="Zhao J.-S."/>
            <person name="Richardson P."/>
        </authorList>
    </citation>
    <scope>NUCLEOTIDE SEQUENCE [LARGE SCALE GENOMIC DNA]</scope>
    <source>
        <strain>ATCC 51908 / MS32</strain>
    </source>
</reference>
<name>CCA_SHEWM</name>
<protein>
    <recommendedName>
        <fullName evidence="1">Multifunctional CCA protein</fullName>
    </recommendedName>
    <domain>
        <recommendedName>
            <fullName evidence="1">CCA-adding enzyme</fullName>
            <ecNumber evidence="1">2.7.7.72</ecNumber>
        </recommendedName>
        <alternativeName>
            <fullName evidence="1">CCA tRNA nucleotidyltransferase</fullName>
        </alternativeName>
        <alternativeName>
            <fullName evidence="1">tRNA CCA-pyrophosphorylase</fullName>
        </alternativeName>
        <alternativeName>
            <fullName evidence="1">tRNA adenylyl-/cytidylyl-transferase</fullName>
        </alternativeName>
        <alternativeName>
            <fullName evidence="1">tRNA nucleotidyltransferase</fullName>
        </alternativeName>
        <alternativeName>
            <fullName evidence="1">tRNA-NT</fullName>
        </alternativeName>
    </domain>
    <domain>
        <recommendedName>
            <fullName evidence="1">2'-nucleotidase</fullName>
            <ecNumber evidence="1">3.1.3.-</ecNumber>
        </recommendedName>
    </domain>
    <domain>
        <recommendedName>
            <fullName evidence="1">2',3'-cyclic phosphodiesterase</fullName>
            <ecNumber evidence="1">3.1.4.-</ecNumber>
        </recommendedName>
    </domain>
    <domain>
        <recommendedName>
            <fullName evidence="1">Phosphatase</fullName>
            <ecNumber evidence="1">3.1.3.-</ecNumber>
        </recommendedName>
    </domain>
</protein>